<organism>
    <name type="scientific">Conus parius</name>
    <name type="common">Cone snail</name>
    <dbReference type="NCBI Taxonomy" id="505247"/>
    <lineage>
        <taxon>Eukaryota</taxon>
        <taxon>Metazoa</taxon>
        <taxon>Spiralia</taxon>
        <taxon>Lophotrochozoa</taxon>
        <taxon>Mollusca</taxon>
        <taxon>Gastropoda</taxon>
        <taxon>Caenogastropoda</taxon>
        <taxon>Neogastropoda</taxon>
        <taxon>Conoidea</taxon>
        <taxon>Conidae</taxon>
        <taxon>Conus</taxon>
        <taxon>Phasmoconus</taxon>
    </lineage>
</organism>
<feature type="peptide" id="PRO_0000353128" description="Conantokin-Pr2" evidence="2">
    <location>
        <begin position="1"/>
        <end position="19"/>
    </location>
</feature>
<feature type="binding site" description="via 4-carboxyglutamate" evidence="1">
    <location>
        <position position="7"/>
    </location>
    <ligand>
        <name>a divalent metal cation</name>
        <dbReference type="ChEBI" id="CHEBI:60240"/>
    </ligand>
</feature>
<feature type="binding site" description="via 4-carboxyglutamate" evidence="1">
    <location>
        <position position="11"/>
    </location>
    <ligand>
        <name>a divalent metal cation</name>
        <dbReference type="ChEBI" id="CHEBI:60240"/>
    </ligand>
</feature>
<feature type="modified residue" description="4-hydroxyproline" evidence="2">
    <location>
        <position position="3"/>
    </location>
</feature>
<feature type="modified residue" description="4-carboxyglutamate" evidence="2">
    <location>
        <position position="4"/>
    </location>
</feature>
<feature type="modified residue" description="4-carboxyglutamate" evidence="2">
    <location>
        <position position="7"/>
    </location>
</feature>
<feature type="modified residue" description="4-carboxyglutamate" evidence="2">
    <location>
        <position position="11"/>
    </location>
</feature>
<name>CKP2_CONPI</name>
<evidence type="ECO:0000250" key="1">
    <source>
        <dbReference type="UniProtKB" id="P07231"/>
    </source>
</evidence>
<evidence type="ECO:0000269" key="2">
    <source>
    </source>
</evidence>
<evidence type="ECO:0000303" key="3">
    <source>
    </source>
</evidence>
<evidence type="ECO:0000305" key="4"/>
<evidence type="ECO:0000305" key="5">
    <source>
    </source>
</evidence>
<sequence>DEPEYAEAIREYQLKYGKI</sequence>
<protein>
    <recommendedName>
        <fullName evidence="3">Conantokin-Pr2</fullName>
        <shortName evidence="3">Con-Pr2</shortName>
    </recommendedName>
</protein>
<comment type="function">
    <text evidence="2">Conantokins inhibit N-methyl-D-aspartate (NMDA) receptors. This toxin has the highest potency for the NR2B/GRIN2B subunit and a smaller potency for the NR2D/GRIN2D subunits. It induces sleep in 10-day-old mice when injected intracranially, and hyperactivity in 24-day-old mice.</text>
</comment>
<comment type="cofactor">
    <cofactor evidence="2">
        <name>Ca(2+)</name>
        <dbReference type="ChEBI" id="CHEBI:29108"/>
    </cofactor>
    <cofactor evidence="2">
        <name>Mg(2+)</name>
        <dbReference type="ChEBI" id="CHEBI:18420"/>
    </cofactor>
    <text evidence="2">Adopts alpha-helical conformations in the presence of divalent cations and is unstructured in the absence of divalent cations.</text>
</comment>
<comment type="subcellular location">
    <subcellularLocation>
        <location evidence="2">Secreted</location>
    </subcellularLocation>
</comment>
<comment type="tissue specificity">
    <text evidence="5">Expressed by the venom duct.</text>
</comment>
<comment type="mass spectrometry"/>
<comment type="miscellaneous">
    <text evidence="4">The mature peptide does not contain cysteine residue.</text>
</comment>
<comment type="similarity">
    <text evidence="4">Belongs to the conotoxin B superfamily.</text>
</comment>
<keyword id="KW-0106">Calcium</keyword>
<keyword id="KW-0903">Direct protein sequencing</keyword>
<keyword id="KW-0301">Gamma-carboxyglutamic acid</keyword>
<keyword id="KW-0379">Hydroxylation</keyword>
<keyword id="KW-0872">Ion channel impairing toxin</keyword>
<keyword id="KW-1028">Ionotropic glutamate receptor inhibitor</keyword>
<keyword id="KW-0460">Magnesium</keyword>
<keyword id="KW-0479">Metal-binding</keyword>
<keyword id="KW-0528">Neurotoxin</keyword>
<keyword id="KW-0629">Postsynaptic neurotoxin</keyword>
<keyword id="KW-0964">Secreted</keyword>
<keyword id="KW-0800">Toxin</keyword>
<dbReference type="ConoServer" id="3536">
    <property type="toxin name" value="Conantokin-Pr2"/>
</dbReference>
<dbReference type="GO" id="GO:0005576">
    <property type="term" value="C:extracellular region"/>
    <property type="evidence" value="ECO:0007669"/>
    <property type="project" value="UniProtKB-SubCell"/>
</dbReference>
<dbReference type="GO" id="GO:0035792">
    <property type="term" value="C:host cell postsynaptic membrane"/>
    <property type="evidence" value="ECO:0007669"/>
    <property type="project" value="UniProtKB-KW"/>
</dbReference>
<dbReference type="GO" id="GO:0099106">
    <property type="term" value="F:ion channel regulator activity"/>
    <property type="evidence" value="ECO:0007669"/>
    <property type="project" value="UniProtKB-KW"/>
</dbReference>
<dbReference type="GO" id="GO:0046872">
    <property type="term" value="F:metal ion binding"/>
    <property type="evidence" value="ECO:0007669"/>
    <property type="project" value="UniProtKB-KW"/>
</dbReference>
<dbReference type="GO" id="GO:0090729">
    <property type="term" value="F:toxin activity"/>
    <property type="evidence" value="ECO:0007669"/>
    <property type="project" value="UniProtKB-KW"/>
</dbReference>
<dbReference type="DisProt" id="DP02321"/>
<reference key="1">
    <citation type="journal article" date="2007" name="J. Biol. Chem.">
        <title>Novel conantokins from Conus parius venom are specific antagonists of N-methyl-D-aspartate receptors.</title>
        <authorList>
            <person name="Teichert R.W."/>
            <person name="Jimenez E.C."/>
            <person name="Twede V."/>
            <person name="Watkins M."/>
            <person name="Hollmann M."/>
            <person name="Bulaj G."/>
            <person name="Olivera B.M."/>
        </authorList>
    </citation>
    <scope>NUCLEOTIDE SEQUENCE [MRNA]</scope>
    <scope>PROTEIN SEQUENCE</scope>
    <scope>SYNTHESIS</scope>
    <scope>FUNCTION</scope>
    <scope>SUBCELLULAR LOCATION</scope>
    <scope>HYDROXYLATION AT PRO-3</scope>
    <scope>GAMMA-CARBOXYGLUTAMATION AT GLU-4; GLU-7 AND GLU-11</scope>
    <scope>MASS SPECTROMETRY</scope>
    <scope>COFACTOR</scope>
    <source>
        <tissue>Venom</tissue>
        <tissue>Venom duct</tissue>
    </source>
</reference>
<proteinExistence type="evidence at protein level"/>
<accession>P0C8E1</accession>